<accession>B4EWY5</accession>
<gene>
    <name evidence="1" type="primary">frdC</name>
    <name type="ordered locus">PMI3586</name>
</gene>
<proteinExistence type="inferred from homology"/>
<protein>
    <recommendedName>
        <fullName evidence="1">Fumarate reductase subunit C</fullName>
    </recommendedName>
    <alternativeName>
        <fullName evidence="1">Fumarate reductase 15 kDa hydrophobic protein</fullName>
    </alternativeName>
    <alternativeName>
        <fullName evidence="1">Quinol-fumarate reductase subunit C</fullName>
        <shortName evidence="1">QFR subunit C</shortName>
    </alternativeName>
</protein>
<feature type="chain" id="PRO_1000132379" description="Fumarate reductase subunit C">
    <location>
        <begin position="1"/>
        <end position="131"/>
    </location>
</feature>
<feature type="transmembrane region" description="Helical" evidence="1">
    <location>
        <begin position="30"/>
        <end position="50"/>
    </location>
</feature>
<feature type="transmembrane region" description="Helical" evidence="1">
    <location>
        <begin position="58"/>
        <end position="78"/>
    </location>
</feature>
<feature type="transmembrane region" description="Helical" evidence="1">
    <location>
        <begin position="109"/>
        <end position="129"/>
    </location>
</feature>
<name>FRDC_PROMH</name>
<reference key="1">
    <citation type="journal article" date="2008" name="J. Bacteriol.">
        <title>Complete genome sequence of uropathogenic Proteus mirabilis, a master of both adherence and motility.</title>
        <authorList>
            <person name="Pearson M.M."/>
            <person name="Sebaihia M."/>
            <person name="Churcher C."/>
            <person name="Quail M.A."/>
            <person name="Seshasayee A.S."/>
            <person name="Luscombe N.M."/>
            <person name="Abdellah Z."/>
            <person name="Arrosmith C."/>
            <person name="Atkin B."/>
            <person name="Chillingworth T."/>
            <person name="Hauser H."/>
            <person name="Jagels K."/>
            <person name="Moule S."/>
            <person name="Mungall K."/>
            <person name="Norbertczak H."/>
            <person name="Rabbinowitsch E."/>
            <person name="Walker D."/>
            <person name="Whithead S."/>
            <person name="Thomson N.R."/>
            <person name="Rather P.N."/>
            <person name="Parkhill J."/>
            <person name="Mobley H.L.T."/>
        </authorList>
    </citation>
    <scope>NUCLEOTIDE SEQUENCE [LARGE SCALE GENOMIC DNA]</scope>
    <source>
        <strain>HI4320</strain>
    </source>
</reference>
<dbReference type="EMBL" id="AM942759">
    <property type="protein sequence ID" value="CAR47020.1"/>
    <property type="molecule type" value="Genomic_DNA"/>
</dbReference>
<dbReference type="RefSeq" id="WP_004245411.1">
    <property type="nucleotide sequence ID" value="NC_010554.1"/>
</dbReference>
<dbReference type="SMR" id="B4EWY5"/>
<dbReference type="EnsemblBacteria" id="CAR47020">
    <property type="protein sequence ID" value="CAR47020"/>
    <property type="gene ID" value="PMI3586"/>
</dbReference>
<dbReference type="GeneID" id="6800660"/>
<dbReference type="KEGG" id="pmr:PMI3586"/>
<dbReference type="eggNOG" id="COG3029">
    <property type="taxonomic scope" value="Bacteria"/>
</dbReference>
<dbReference type="HOGENOM" id="CLU_156492_0_0_6"/>
<dbReference type="Proteomes" id="UP000008319">
    <property type="component" value="Chromosome"/>
</dbReference>
<dbReference type="GO" id="GO:0045283">
    <property type="term" value="C:fumarate reductase complex"/>
    <property type="evidence" value="ECO:0007669"/>
    <property type="project" value="UniProtKB-UniRule"/>
</dbReference>
<dbReference type="GO" id="GO:0005886">
    <property type="term" value="C:plasma membrane"/>
    <property type="evidence" value="ECO:0007669"/>
    <property type="project" value="UniProtKB-SubCell"/>
</dbReference>
<dbReference type="GO" id="GO:0000104">
    <property type="term" value="F:succinate dehydrogenase activity"/>
    <property type="evidence" value="ECO:0007669"/>
    <property type="project" value="UniProtKB-UniRule"/>
</dbReference>
<dbReference type="CDD" id="cd00546">
    <property type="entry name" value="QFR_TypeD_subunitC"/>
    <property type="match status" value="1"/>
</dbReference>
<dbReference type="Gene3D" id="1.20.1300.10">
    <property type="entry name" value="Fumarate reductase/succinate dehydrogenase, transmembrane subunit"/>
    <property type="match status" value="1"/>
</dbReference>
<dbReference type="HAMAP" id="MF_00708">
    <property type="entry name" value="Fumarate_red_C"/>
    <property type="match status" value="1"/>
</dbReference>
<dbReference type="InterPro" id="IPR003510">
    <property type="entry name" value="Fumarate_red_C"/>
</dbReference>
<dbReference type="InterPro" id="IPR034804">
    <property type="entry name" value="SQR/QFR_C/D"/>
</dbReference>
<dbReference type="NCBIfam" id="NF003445">
    <property type="entry name" value="PRK04987.1"/>
    <property type="match status" value="1"/>
</dbReference>
<dbReference type="Pfam" id="PF02300">
    <property type="entry name" value="Fumarate_red_C"/>
    <property type="match status" value="1"/>
</dbReference>
<dbReference type="PIRSF" id="PIRSF000180">
    <property type="entry name" value="FrdC"/>
    <property type="match status" value="1"/>
</dbReference>
<dbReference type="SUPFAM" id="SSF81343">
    <property type="entry name" value="Fumarate reductase respiratory complex transmembrane subunits"/>
    <property type="match status" value="1"/>
</dbReference>
<keyword id="KW-0997">Cell inner membrane</keyword>
<keyword id="KW-1003">Cell membrane</keyword>
<keyword id="KW-0472">Membrane</keyword>
<keyword id="KW-1185">Reference proteome</keyword>
<keyword id="KW-0812">Transmembrane</keyword>
<keyword id="KW-1133">Transmembrane helix</keyword>
<sequence>MTTKRKPYVRGMQPNWWTKLGFYRFYITREGTCLPQLWFSLVVLFGVFALKNGPESWAGFVGFLSNPIVMLINIVTLIATVFHTATWFKLAPKAVNIVVKDEKLPQEPIVRGLWGLTIVVTVVILAVALIV</sequence>
<organism>
    <name type="scientific">Proteus mirabilis (strain HI4320)</name>
    <dbReference type="NCBI Taxonomy" id="529507"/>
    <lineage>
        <taxon>Bacteria</taxon>
        <taxon>Pseudomonadati</taxon>
        <taxon>Pseudomonadota</taxon>
        <taxon>Gammaproteobacteria</taxon>
        <taxon>Enterobacterales</taxon>
        <taxon>Morganellaceae</taxon>
        <taxon>Proteus</taxon>
    </lineage>
</organism>
<comment type="function">
    <text evidence="1">Two distinct, membrane-bound, FAD-containing enzymes are responsible for the catalysis of fumarate and succinate interconversion; fumarate reductase is used in anaerobic growth, and succinate dehydrogenase is used in aerobic growth. Anchors the catalytic components of the fumarate reductase complex to the cell inner membrane, binds quinones.</text>
</comment>
<comment type="subunit">
    <text evidence="1">Part of an enzyme complex containing four subunits: a flavoprotein (FrdA), an iron-sulfur protein (FrdB), and two hydrophobic anchor proteins (FrdC and FrdD).</text>
</comment>
<comment type="subcellular location">
    <subcellularLocation>
        <location evidence="1">Cell inner membrane</location>
        <topology evidence="1">Multi-pass membrane protein</topology>
    </subcellularLocation>
</comment>
<comment type="similarity">
    <text evidence="1">Belongs to the FrdC family.</text>
</comment>
<evidence type="ECO:0000255" key="1">
    <source>
        <dbReference type="HAMAP-Rule" id="MF_00708"/>
    </source>
</evidence>